<proteinExistence type="inferred from homology"/>
<feature type="chain" id="PRO_0000408783" description="Restriction of telomere capping protein 1">
    <location>
        <begin position="1"/>
        <end position="1386"/>
    </location>
</feature>
<feature type="repeat" description="WD 1">
    <location>
        <begin position="180"/>
        <end position="227"/>
    </location>
</feature>
<feature type="repeat" description="WD 2">
    <location>
        <begin position="234"/>
        <end position="278"/>
    </location>
</feature>
<feature type="repeat" description="WD 3">
    <location>
        <begin position="290"/>
        <end position="329"/>
    </location>
</feature>
<feature type="repeat" description="WD 4">
    <location>
        <begin position="382"/>
        <end position="428"/>
    </location>
</feature>
<feature type="repeat" description="WD 5">
    <location>
        <begin position="1171"/>
        <end position="1212"/>
    </location>
</feature>
<feature type="zinc finger region" description="RING-type; degenerate" evidence="2">
    <location>
        <begin position="1338"/>
        <end position="1381"/>
    </location>
</feature>
<feature type="region of interest" description="Disordered" evidence="3">
    <location>
        <begin position="31"/>
        <end position="58"/>
    </location>
</feature>
<feature type="region of interest" description="Disordered" evidence="3">
    <location>
        <begin position="595"/>
        <end position="629"/>
    </location>
</feature>
<feature type="region of interest" description="Disordered" evidence="3">
    <location>
        <begin position="647"/>
        <end position="691"/>
    </location>
</feature>
<feature type="region of interest" description="Disordered" evidence="3">
    <location>
        <begin position="844"/>
        <end position="958"/>
    </location>
</feature>
<feature type="region of interest" description="Disordered" evidence="3">
    <location>
        <begin position="991"/>
        <end position="1021"/>
    </location>
</feature>
<feature type="region of interest" description="Disordered" evidence="3">
    <location>
        <begin position="1090"/>
        <end position="1157"/>
    </location>
</feature>
<feature type="compositionally biased region" description="Polar residues" evidence="3">
    <location>
        <begin position="31"/>
        <end position="56"/>
    </location>
</feature>
<feature type="compositionally biased region" description="Low complexity" evidence="3">
    <location>
        <begin position="595"/>
        <end position="606"/>
    </location>
</feature>
<feature type="compositionally biased region" description="Low complexity" evidence="3">
    <location>
        <begin position="649"/>
        <end position="663"/>
    </location>
</feature>
<feature type="compositionally biased region" description="Polar residues" evidence="3">
    <location>
        <begin position="669"/>
        <end position="690"/>
    </location>
</feature>
<feature type="compositionally biased region" description="Low complexity" evidence="3">
    <location>
        <begin position="859"/>
        <end position="872"/>
    </location>
</feature>
<feature type="compositionally biased region" description="Polar residues" evidence="3">
    <location>
        <begin position="884"/>
        <end position="928"/>
    </location>
</feature>
<feature type="compositionally biased region" description="Polar residues" evidence="3">
    <location>
        <begin position="1006"/>
        <end position="1016"/>
    </location>
</feature>
<feature type="compositionally biased region" description="Polar residues" evidence="3">
    <location>
        <begin position="1090"/>
        <end position="1121"/>
    </location>
</feature>
<feature type="compositionally biased region" description="Polar residues" evidence="3">
    <location>
        <begin position="1134"/>
        <end position="1145"/>
    </location>
</feature>
<feature type="compositionally biased region" description="Basic and acidic residues" evidence="3">
    <location>
        <begin position="1148"/>
        <end position="1157"/>
    </location>
</feature>
<name>RTC1_DEBHA</name>
<dbReference type="EMBL" id="CR382133">
    <property type="protein sequence ID" value="CAG84922.2"/>
    <property type="molecule type" value="Genomic_DNA"/>
</dbReference>
<dbReference type="RefSeq" id="XP_456944.2">
    <property type="nucleotide sequence ID" value="XM_456944.1"/>
</dbReference>
<dbReference type="SMR" id="Q6BXX5"/>
<dbReference type="FunCoup" id="Q6BXX5">
    <property type="interactions" value="141"/>
</dbReference>
<dbReference type="STRING" id="284592.Q6BXX5"/>
<dbReference type="GeneID" id="2899395"/>
<dbReference type="KEGG" id="dha:DEHA2A14124g"/>
<dbReference type="VEuPathDB" id="FungiDB:DEHA2A14124g"/>
<dbReference type="eggNOG" id="KOG0269">
    <property type="taxonomic scope" value="Eukaryota"/>
</dbReference>
<dbReference type="HOGENOM" id="CLU_008512_0_0_1"/>
<dbReference type="InParanoid" id="Q6BXX5"/>
<dbReference type="OMA" id="GRDGKCC"/>
<dbReference type="OrthoDB" id="60955at2759"/>
<dbReference type="Proteomes" id="UP000000599">
    <property type="component" value="Chromosome A"/>
</dbReference>
<dbReference type="GO" id="GO:0005829">
    <property type="term" value="C:cytosol"/>
    <property type="evidence" value="ECO:0007669"/>
    <property type="project" value="TreeGrafter"/>
</dbReference>
<dbReference type="GO" id="GO:0061700">
    <property type="term" value="C:GATOR2 complex"/>
    <property type="evidence" value="ECO:0007669"/>
    <property type="project" value="TreeGrafter"/>
</dbReference>
<dbReference type="GO" id="GO:0005774">
    <property type="term" value="C:vacuolar membrane"/>
    <property type="evidence" value="ECO:0007669"/>
    <property type="project" value="TreeGrafter"/>
</dbReference>
<dbReference type="GO" id="GO:0008270">
    <property type="term" value="F:zinc ion binding"/>
    <property type="evidence" value="ECO:0007669"/>
    <property type="project" value="UniProtKB-KW"/>
</dbReference>
<dbReference type="GO" id="GO:0016239">
    <property type="term" value="P:positive regulation of macroautophagy"/>
    <property type="evidence" value="ECO:0007669"/>
    <property type="project" value="TreeGrafter"/>
</dbReference>
<dbReference type="GO" id="GO:1904263">
    <property type="term" value="P:positive regulation of TORC1 signaling"/>
    <property type="evidence" value="ECO:0007669"/>
    <property type="project" value="TreeGrafter"/>
</dbReference>
<dbReference type="CDD" id="cd16488">
    <property type="entry name" value="mRING-H2-C3H3C2_Mio-like"/>
    <property type="match status" value="1"/>
</dbReference>
<dbReference type="Gene3D" id="2.130.10.10">
    <property type="entry name" value="YVTN repeat-like/Quinoprotein amine dehydrogenase"/>
    <property type="match status" value="1"/>
</dbReference>
<dbReference type="InterPro" id="IPR015943">
    <property type="entry name" value="WD40/YVTN_repeat-like_dom_sf"/>
</dbReference>
<dbReference type="InterPro" id="IPR019775">
    <property type="entry name" value="WD40_repeat_CS"/>
</dbReference>
<dbReference type="InterPro" id="IPR036322">
    <property type="entry name" value="WD40_repeat_dom_sf"/>
</dbReference>
<dbReference type="InterPro" id="IPR001680">
    <property type="entry name" value="WD40_rpt"/>
</dbReference>
<dbReference type="InterPro" id="IPR037590">
    <property type="entry name" value="WDR24"/>
</dbReference>
<dbReference type="InterPro" id="IPR001841">
    <property type="entry name" value="Znf_RING"/>
</dbReference>
<dbReference type="PANTHER" id="PTHR46200">
    <property type="entry name" value="GATOR COMPLEX PROTEIN WDR24"/>
    <property type="match status" value="1"/>
</dbReference>
<dbReference type="PANTHER" id="PTHR46200:SF1">
    <property type="entry name" value="GATOR COMPLEX PROTEIN WDR24"/>
    <property type="match status" value="1"/>
</dbReference>
<dbReference type="Pfam" id="PF00400">
    <property type="entry name" value="WD40"/>
    <property type="match status" value="2"/>
</dbReference>
<dbReference type="SMART" id="SM00320">
    <property type="entry name" value="WD40"/>
    <property type="match status" value="3"/>
</dbReference>
<dbReference type="SUPFAM" id="SSF50978">
    <property type="entry name" value="WD40 repeat-like"/>
    <property type="match status" value="1"/>
</dbReference>
<dbReference type="PROSITE" id="PS00678">
    <property type="entry name" value="WD_REPEATS_1"/>
    <property type="match status" value="1"/>
</dbReference>
<dbReference type="PROSITE" id="PS50082">
    <property type="entry name" value="WD_REPEATS_2"/>
    <property type="match status" value="2"/>
</dbReference>
<dbReference type="PROSITE" id="PS50294">
    <property type="entry name" value="WD_REPEATS_REGION"/>
    <property type="match status" value="1"/>
</dbReference>
<dbReference type="PROSITE" id="PS50089">
    <property type="entry name" value="ZF_RING_2"/>
    <property type="match status" value="1"/>
</dbReference>
<organism>
    <name type="scientific">Debaryomyces hansenii (strain ATCC 36239 / CBS 767 / BCRC 21394 / JCM 1990 / NBRC 0083 / IGC 2968)</name>
    <name type="common">Yeast</name>
    <name type="synonym">Torulaspora hansenii</name>
    <dbReference type="NCBI Taxonomy" id="284592"/>
    <lineage>
        <taxon>Eukaryota</taxon>
        <taxon>Fungi</taxon>
        <taxon>Dikarya</taxon>
        <taxon>Ascomycota</taxon>
        <taxon>Saccharomycotina</taxon>
        <taxon>Pichiomycetes</taxon>
        <taxon>Debaryomycetaceae</taxon>
        <taxon>Debaryomyces</taxon>
    </lineage>
</organism>
<accession>Q6BXX5</accession>
<evidence type="ECO:0000250" key="1"/>
<evidence type="ECO:0000255" key="2">
    <source>
        <dbReference type="PROSITE-ProRule" id="PRU00175"/>
    </source>
</evidence>
<evidence type="ECO:0000256" key="3">
    <source>
        <dbReference type="SAM" id="MobiDB-lite"/>
    </source>
</evidence>
<evidence type="ECO:0000305" key="4"/>
<sequence length="1386" mass="154884">MPDPNELNANQSSLSRFAFNIYGALNQAQSLEGNSSASPTPSMNPKQHNKSGTSSSNKEKLVYNCEREVSCISQFNHSLNGLVKNYEEDPLHHLIIGGKNYLKLLAMNNDQTKIVHEVDILESSKSIYSSSRTLSSNKLTSVNTIESQHDTIACELATGLISVYKVQNNGKCKLVRKYSDHIRCVNSLDFINQSNVANSSSPYQLISGSQDGTIKLWDLRSASNKPTLTISSNSHSDPVRSCQYSPHSTVRNKLTILSVHDSGALCKYDLRSPNGGYQHNINVPERKWNFHTGPALSLNIHPEKEYVITGGRDQKVCIWNYGDSPTHQNKISPDYMINTYGPVMKIRWSVYPDNIPSKTDTSSSQYQQILESKRYDDKTSSNERETISTMSSVGKNDPLFNYDFACSFLNEDPTISIYNLKRKYIPKEVISSNSNKPFQNFMWAQNISHSRRVWTISKSNQFMSYDLDTAQSDPNIIKPLDNLTSVSMAWNSGLGDFCFVNQEKDEFESISQLENDSFRSESEEYDPEFALASDGSGLASNSGMEDHPTDERSLKYRISSNSLDNSSIYNNHSKITVASIPIASNASNTPLSYQNPSFSNSVSPPFEQTTKPSLHRSATHNPMIQPPKPLSSILQNRSSVGIEALMEHGNNNSGSNSASVSGNHLRPTLNRNHSQSTQGSNVSLSSSIQGYQAPPPVSKRVISVNHPSPYIVPLSLPLPQNDEHAFEILSNNYLITVNDGLSLIDVCLYNANIAAGVNKFRDCQTWRVLAVSLEEDKFSLINYEENIRSQFEKAETAITYGSLDTYENNSNTSNSKTQLNQTNDNRSILSELDNFVGSFNSNSTSTSNYGGVHSEKDTSNNIELSNANNNGSRKASFSEIKPLSNLNSPSHLKDVLNQSRSNSNSPVISRSNSMLLKNRKTINTGSTRAENHESAIDDDDGMGNAKTCELNENDSQFGMKNSELKKHSSMSAIDSEAIDNDFPYNIESAKASPIKIGSQHKHEKNTTSGSMSPQNKDSNHRGNIINYQRRLSLDPENSRKNSRNAFNYRHTNTWDLDDENSNIIGNRAQWATNSSLSSCGVSSYQPRIGSPNYSDQLHHSYSSTHSSPRPYYNSTTPGSSRRNSHISPVHGFHNKTSYAKQSPVSQKLMRDEQSRTELKDVQEQIEDLESIEETKVTSVNFGKSELTRAITGNNTGSPNTLYKPWKTEYLLKEALEFASLQGDILLCSILTILFYDYLKVGKDSHVFSKEQSLDWLSLYVEILHRKQLFSNAMYVVNMAPKELLPDLANLASTEVNLRFFCCWCQKLLVNEKSKRKALNEDSFGYWYCDECSTKQSNCIYCDEPCKGLNIVTSLSCGHRGHFGCLREWFIDQENIVCPGGCDEQVI</sequence>
<gene>
    <name type="primary">RTC1</name>
    <name type="ordered locus">DEHA2A14124g</name>
</gene>
<reference key="1">
    <citation type="journal article" date="2004" name="Nature">
        <title>Genome evolution in yeasts.</title>
        <authorList>
            <person name="Dujon B."/>
            <person name="Sherman D."/>
            <person name="Fischer G."/>
            <person name="Durrens P."/>
            <person name="Casaregola S."/>
            <person name="Lafontaine I."/>
            <person name="de Montigny J."/>
            <person name="Marck C."/>
            <person name="Neuveglise C."/>
            <person name="Talla E."/>
            <person name="Goffard N."/>
            <person name="Frangeul L."/>
            <person name="Aigle M."/>
            <person name="Anthouard V."/>
            <person name="Babour A."/>
            <person name="Barbe V."/>
            <person name="Barnay S."/>
            <person name="Blanchin S."/>
            <person name="Beckerich J.-M."/>
            <person name="Beyne E."/>
            <person name="Bleykasten C."/>
            <person name="Boisrame A."/>
            <person name="Boyer J."/>
            <person name="Cattolico L."/>
            <person name="Confanioleri F."/>
            <person name="de Daruvar A."/>
            <person name="Despons L."/>
            <person name="Fabre E."/>
            <person name="Fairhead C."/>
            <person name="Ferry-Dumazet H."/>
            <person name="Groppi A."/>
            <person name="Hantraye F."/>
            <person name="Hennequin C."/>
            <person name="Jauniaux N."/>
            <person name="Joyet P."/>
            <person name="Kachouri R."/>
            <person name="Kerrest A."/>
            <person name="Koszul R."/>
            <person name="Lemaire M."/>
            <person name="Lesur I."/>
            <person name="Ma L."/>
            <person name="Muller H."/>
            <person name="Nicaud J.-M."/>
            <person name="Nikolski M."/>
            <person name="Oztas S."/>
            <person name="Ozier-Kalogeropoulos O."/>
            <person name="Pellenz S."/>
            <person name="Potier S."/>
            <person name="Richard G.-F."/>
            <person name="Straub M.-L."/>
            <person name="Suleau A."/>
            <person name="Swennen D."/>
            <person name="Tekaia F."/>
            <person name="Wesolowski-Louvel M."/>
            <person name="Westhof E."/>
            <person name="Wirth B."/>
            <person name="Zeniou-Meyer M."/>
            <person name="Zivanovic Y."/>
            <person name="Bolotin-Fukuhara M."/>
            <person name="Thierry A."/>
            <person name="Bouchier C."/>
            <person name="Caudron B."/>
            <person name="Scarpelli C."/>
            <person name="Gaillardin C."/>
            <person name="Weissenbach J."/>
            <person name="Wincker P."/>
            <person name="Souciet J.-L."/>
        </authorList>
    </citation>
    <scope>NUCLEOTIDE SEQUENCE [LARGE SCALE GENOMIC DNA]</scope>
    <source>
        <strain>ATCC 36239 / CBS 767 / BCRC 21394 / JCM 1990 / NBRC 0083 / IGC 2968</strain>
    </source>
</reference>
<comment type="function">
    <text evidence="1">May be involved in a process influencing telomere capping.</text>
</comment>
<comment type="subcellular location">
    <subcellularLocation>
        <location evidence="1">Vacuole</location>
    </subcellularLocation>
</comment>
<comment type="similarity">
    <text evidence="4">Belongs to the WD repeat RTC1 family.</text>
</comment>
<protein>
    <recommendedName>
        <fullName>Restriction of telomere capping protein 1</fullName>
    </recommendedName>
</protein>
<keyword id="KW-0479">Metal-binding</keyword>
<keyword id="KW-1185">Reference proteome</keyword>
<keyword id="KW-0677">Repeat</keyword>
<keyword id="KW-0926">Vacuole</keyword>
<keyword id="KW-0853">WD repeat</keyword>
<keyword id="KW-0862">Zinc</keyword>
<keyword id="KW-0863">Zinc-finger</keyword>